<keyword id="KW-0027">Amidation</keyword>
<keyword id="KW-0878">Amphibian defense peptide</keyword>
<keyword id="KW-0044">Antibiotic</keyword>
<keyword id="KW-0929">Antimicrobial</keyword>
<keyword id="KW-0903">Direct protein sequencing</keyword>
<keyword id="KW-0964">Secreted</keyword>
<protein>
    <recommendedName>
        <fullName evidence="4">Dermaseptin-J3</fullName>
        <shortName evidence="4">DRS-J3</shortName>
    </recommendedName>
</protein>
<name>DMS3_PHAJA</name>
<evidence type="ECO:0000250" key="1">
    <source>
        <dbReference type="UniProtKB" id="P84926"/>
    </source>
</evidence>
<evidence type="ECO:0000255" key="2"/>
<evidence type="ECO:0000269" key="3">
    <source>
    </source>
</evidence>
<evidence type="ECO:0000303" key="4">
    <source>
    </source>
</evidence>
<evidence type="ECO:0000305" key="5"/>
<reference evidence="5" key="1">
    <citation type="journal article" date="2011" name="Toxicon">
        <title>Peptidomic dissection of the skin secretion of Phasmahyla jandaia (Bokermann and Sazima, 1978) (Anura, Hylidae, Phyllomedusinae).</title>
        <authorList>
            <person name="Rates B."/>
            <person name="Silva L.P."/>
            <person name="Ireno I.C."/>
            <person name="Leite F.S."/>
            <person name="Borges M.H."/>
            <person name="Bloch C. Jr."/>
            <person name="De Lima M.E."/>
            <person name="Pimenta A.M."/>
        </authorList>
    </citation>
    <scope>PROTEIN SEQUENCE</scope>
    <scope>SUBCELLULAR LOCATION</scope>
    <scope>TISSUE SPECIFICITY</scope>
    <scope>MASS SPECTROMETRY</scope>
    <scope>AMIDATION AT VAL-26</scope>
    <source>
        <tissue evidence="3">Skin secretion</tissue>
    </source>
</reference>
<sequence>ALWKNMLSGIGKLAGQAALGAVKTLV</sequence>
<dbReference type="GO" id="GO:0005576">
    <property type="term" value="C:extracellular region"/>
    <property type="evidence" value="ECO:0007669"/>
    <property type="project" value="UniProtKB-SubCell"/>
</dbReference>
<dbReference type="GO" id="GO:0042742">
    <property type="term" value="P:defense response to bacterium"/>
    <property type="evidence" value="ECO:0007669"/>
    <property type="project" value="UniProtKB-KW"/>
</dbReference>
<dbReference type="InterPro" id="IPR022731">
    <property type="entry name" value="Dermaseptin_dom"/>
</dbReference>
<dbReference type="Pfam" id="PF12121">
    <property type="entry name" value="DD_K"/>
    <property type="match status" value="1"/>
</dbReference>
<comment type="function">
    <text evidence="1">Has antimicrobial activity.</text>
</comment>
<comment type="subcellular location">
    <subcellularLocation>
        <location evidence="3">Secreted</location>
    </subcellularLocation>
</comment>
<comment type="tissue specificity">
    <text evidence="3">Expressed by the skin glands.</text>
</comment>
<comment type="mass spectrometry"/>
<comment type="similarity">
    <text evidence="2">Belongs to the frog skin active peptide (FSAP) family. Dermaseptin subfamily.</text>
</comment>
<organism>
    <name type="scientific">Phasmahyla jandaia</name>
    <name type="common">Jandaia leaf frog</name>
    <name type="synonym">Phyllomedusa jandaia</name>
    <dbReference type="NCBI Taxonomy" id="762504"/>
    <lineage>
        <taxon>Eukaryota</taxon>
        <taxon>Metazoa</taxon>
        <taxon>Chordata</taxon>
        <taxon>Craniata</taxon>
        <taxon>Vertebrata</taxon>
        <taxon>Euteleostomi</taxon>
        <taxon>Amphibia</taxon>
        <taxon>Batrachia</taxon>
        <taxon>Anura</taxon>
        <taxon>Neobatrachia</taxon>
        <taxon>Hyloidea</taxon>
        <taxon>Hylidae</taxon>
        <taxon>Phyllomedusinae</taxon>
        <taxon>Phasmahyla</taxon>
    </lineage>
</organism>
<feature type="peptide" id="PRO_0000404612" description="Dermaseptin-J3" evidence="3">
    <location>
        <begin position="1"/>
        <end position="26"/>
    </location>
</feature>
<feature type="modified residue" description="Valine amide" evidence="3">
    <location>
        <position position="26"/>
    </location>
</feature>
<feature type="unsure residue" description="L or I" evidence="3">
    <location>
        <position position="2"/>
    </location>
</feature>
<feature type="unsure residue" description="K or Q" evidence="3">
    <location>
        <position position="4"/>
    </location>
</feature>
<feature type="unsure residue" description="L or I" evidence="3">
    <location>
        <position position="7"/>
    </location>
</feature>
<feature type="unsure residue" description="I or L" evidence="3">
    <location>
        <position position="10"/>
    </location>
</feature>
<feature type="unsure residue" description="K or Q" evidence="3">
    <location>
        <position position="12"/>
    </location>
</feature>
<feature type="unsure residue" description="L or I" evidence="3">
    <location>
        <position position="13"/>
    </location>
</feature>
<feature type="unsure residue" description="Q or K" evidence="3">
    <location>
        <position position="16"/>
    </location>
</feature>
<feature type="unsure residue" description="L or I" evidence="3">
    <location>
        <position position="19"/>
    </location>
</feature>
<feature type="unsure residue" description="K or Q" evidence="3">
    <location>
        <position position="23"/>
    </location>
</feature>
<feature type="unsure residue" description="L or I" evidence="3">
    <location>
        <position position="25"/>
    </location>
</feature>
<proteinExistence type="evidence at protein level"/>
<accession>P86637</accession>